<protein>
    <recommendedName>
        <fullName evidence="1">Nucleoside diphosphate kinase</fullName>
        <shortName evidence="1">NDK</shortName>
        <shortName evidence="1">NDP kinase</shortName>
        <ecNumber evidence="1">2.7.4.6</ecNumber>
    </recommendedName>
    <alternativeName>
        <fullName evidence="1">Nucleoside-2-P kinase</fullName>
    </alternativeName>
</protein>
<keyword id="KW-0067">ATP-binding</keyword>
<keyword id="KW-0963">Cytoplasm</keyword>
<keyword id="KW-0418">Kinase</keyword>
<keyword id="KW-0460">Magnesium</keyword>
<keyword id="KW-0479">Metal-binding</keyword>
<keyword id="KW-0546">Nucleotide metabolism</keyword>
<keyword id="KW-0547">Nucleotide-binding</keyword>
<keyword id="KW-0597">Phosphoprotein</keyword>
<keyword id="KW-1185">Reference proteome</keyword>
<keyword id="KW-0808">Transferase</keyword>
<comment type="function">
    <text evidence="1">Major role in the synthesis of nucleoside triphosphates other than ATP. The ATP gamma phosphate is transferred to the NDP beta phosphate via a ping-pong mechanism, using a phosphorylated active-site intermediate.</text>
</comment>
<comment type="catalytic activity">
    <reaction evidence="1">
        <text>a 2'-deoxyribonucleoside 5'-diphosphate + ATP = a 2'-deoxyribonucleoside 5'-triphosphate + ADP</text>
        <dbReference type="Rhea" id="RHEA:44640"/>
        <dbReference type="ChEBI" id="CHEBI:30616"/>
        <dbReference type="ChEBI" id="CHEBI:61560"/>
        <dbReference type="ChEBI" id="CHEBI:73316"/>
        <dbReference type="ChEBI" id="CHEBI:456216"/>
        <dbReference type="EC" id="2.7.4.6"/>
    </reaction>
</comment>
<comment type="catalytic activity">
    <reaction evidence="1">
        <text>a ribonucleoside 5'-diphosphate + ATP = a ribonucleoside 5'-triphosphate + ADP</text>
        <dbReference type="Rhea" id="RHEA:18113"/>
        <dbReference type="ChEBI" id="CHEBI:30616"/>
        <dbReference type="ChEBI" id="CHEBI:57930"/>
        <dbReference type="ChEBI" id="CHEBI:61557"/>
        <dbReference type="ChEBI" id="CHEBI:456216"/>
        <dbReference type="EC" id="2.7.4.6"/>
    </reaction>
</comment>
<comment type="cofactor">
    <cofactor evidence="1">
        <name>Mg(2+)</name>
        <dbReference type="ChEBI" id="CHEBI:18420"/>
    </cofactor>
</comment>
<comment type="subunit">
    <text evidence="1">Homotetramer.</text>
</comment>
<comment type="subcellular location">
    <subcellularLocation>
        <location evidence="1">Cytoplasm</location>
    </subcellularLocation>
</comment>
<comment type="similarity">
    <text evidence="1">Belongs to the NDK family.</text>
</comment>
<organism>
    <name type="scientific">Wolinella succinogenes (strain ATCC 29543 / DSM 1740 / CCUG 13145 / JCM 31913 / LMG 7466 / NCTC 11488 / FDC 602W)</name>
    <name type="common">Vibrio succinogenes</name>
    <dbReference type="NCBI Taxonomy" id="273121"/>
    <lineage>
        <taxon>Bacteria</taxon>
        <taxon>Pseudomonadati</taxon>
        <taxon>Campylobacterota</taxon>
        <taxon>Epsilonproteobacteria</taxon>
        <taxon>Campylobacterales</taxon>
        <taxon>Helicobacteraceae</taxon>
        <taxon>Wolinella</taxon>
    </lineage>
</organism>
<evidence type="ECO:0000255" key="1">
    <source>
        <dbReference type="HAMAP-Rule" id="MF_00451"/>
    </source>
</evidence>
<dbReference type="EC" id="2.7.4.6" evidence="1"/>
<dbReference type="EMBL" id="BX571662">
    <property type="protein sequence ID" value="CAE10994.1"/>
    <property type="molecule type" value="Genomic_DNA"/>
</dbReference>
<dbReference type="RefSeq" id="WP_011139776.1">
    <property type="nucleotide sequence ID" value="NC_005090.1"/>
</dbReference>
<dbReference type="SMR" id="Q7M7Z3"/>
<dbReference type="STRING" id="273121.WS1991"/>
<dbReference type="KEGG" id="wsu:WS1991"/>
<dbReference type="eggNOG" id="COG0105">
    <property type="taxonomic scope" value="Bacteria"/>
</dbReference>
<dbReference type="HOGENOM" id="CLU_060216_8_1_7"/>
<dbReference type="Proteomes" id="UP000000422">
    <property type="component" value="Chromosome"/>
</dbReference>
<dbReference type="GO" id="GO:0005737">
    <property type="term" value="C:cytoplasm"/>
    <property type="evidence" value="ECO:0007669"/>
    <property type="project" value="UniProtKB-SubCell"/>
</dbReference>
<dbReference type="GO" id="GO:0005524">
    <property type="term" value="F:ATP binding"/>
    <property type="evidence" value="ECO:0007669"/>
    <property type="project" value="UniProtKB-UniRule"/>
</dbReference>
<dbReference type="GO" id="GO:0046872">
    <property type="term" value="F:metal ion binding"/>
    <property type="evidence" value="ECO:0007669"/>
    <property type="project" value="UniProtKB-KW"/>
</dbReference>
<dbReference type="GO" id="GO:0004550">
    <property type="term" value="F:nucleoside diphosphate kinase activity"/>
    <property type="evidence" value="ECO:0007669"/>
    <property type="project" value="UniProtKB-UniRule"/>
</dbReference>
<dbReference type="GO" id="GO:0006241">
    <property type="term" value="P:CTP biosynthetic process"/>
    <property type="evidence" value="ECO:0007669"/>
    <property type="project" value="UniProtKB-UniRule"/>
</dbReference>
<dbReference type="GO" id="GO:0006183">
    <property type="term" value="P:GTP biosynthetic process"/>
    <property type="evidence" value="ECO:0007669"/>
    <property type="project" value="UniProtKB-UniRule"/>
</dbReference>
<dbReference type="GO" id="GO:0006228">
    <property type="term" value="P:UTP biosynthetic process"/>
    <property type="evidence" value="ECO:0007669"/>
    <property type="project" value="UniProtKB-UniRule"/>
</dbReference>
<dbReference type="CDD" id="cd04413">
    <property type="entry name" value="NDPk_I"/>
    <property type="match status" value="1"/>
</dbReference>
<dbReference type="FunFam" id="3.30.70.141:FF:000001">
    <property type="entry name" value="Nucleoside diphosphate kinase"/>
    <property type="match status" value="1"/>
</dbReference>
<dbReference type="Gene3D" id="3.30.70.141">
    <property type="entry name" value="Nucleoside diphosphate kinase-like domain"/>
    <property type="match status" value="1"/>
</dbReference>
<dbReference type="HAMAP" id="MF_00451">
    <property type="entry name" value="NDP_kinase"/>
    <property type="match status" value="1"/>
</dbReference>
<dbReference type="InterPro" id="IPR034907">
    <property type="entry name" value="NDK-like_dom"/>
</dbReference>
<dbReference type="InterPro" id="IPR036850">
    <property type="entry name" value="NDK-like_dom_sf"/>
</dbReference>
<dbReference type="InterPro" id="IPR001564">
    <property type="entry name" value="Nucleoside_diP_kinase"/>
</dbReference>
<dbReference type="InterPro" id="IPR023005">
    <property type="entry name" value="Nucleoside_diP_kinase_AS"/>
</dbReference>
<dbReference type="NCBIfam" id="NF001908">
    <property type="entry name" value="PRK00668.1"/>
    <property type="match status" value="1"/>
</dbReference>
<dbReference type="PANTHER" id="PTHR46161">
    <property type="entry name" value="NUCLEOSIDE DIPHOSPHATE KINASE"/>
    <property type="match status" value="1"/>
</dbReference>
<dbReference type="PANTHER" id="PTHR46161:SF3">
    <property type="entry name" value="NUCLEOSIDE DIPHOSPHATE KINASE DDB_G0292928-RELATED"/>
    <property type="match status" value="1"/>
</dbReference>
<dbReference type="Pfam" id="PF00334">
    <property type="entry name" value="NDK"/>
    <property type="match status" value="1"/>
</dbReference>
<dbReference type="PRINTS" id="PR01243">
    <property type="entry name" value="NUCDPKINASE"/>
</dbReference>
<dbReference type="SMART" id="SM00562">
    <property type="entry name" value="NDK"/>
    <property type="match status" value="1"/>
</dbReference>
<dbReference type="SUPFAM" id="SSF54919">
    <property type="entry name" value="Nucleoside diphosphate kinase, NDK"/>
    <property type="match status" value="1"/>
</dbReference>
<dbReference type="PROSITE" id="PS00469">
    <property type="entry name" value="NDPK"/>
    <property type="match status" value="1"/>
</dbReference>
<dbReference type="PROSITE" id="PS51374">
    <property type="entry name" value="NDPK_LIKE"/>
    <property type="match status" value="1"/>
</dbReference>
<reference key="1">
    <citation type="journal article" date="2003" name="Proc. Natl. Acad. Sci. U.S.A.">
        <title>Complete genome sequence and analysis of Wolinella succinogenes.</title>
        <authorList>
            <person name="Baar C."/>
            <person name="Eppinger M."/>
            <person name="Raddatz G."/>
            <person name="Simon J."/>
            <person name="Lanz C."/>
            <person name="Klimmek O."/>
            <person name="Nandakumar R."/>
            <person name="Gross R."/>
            <person name="Rosinus A."/>
            <person name="Keller H."/>
            <person name="Jagtap P."/>
            <person name="Linke B."/>
            <person name="Meyer F."/>
            <person name="Lederer H."/>
            <person name="Schuster S.C."/>
        </authorList>
    </citation>
    <scope>NUCLEOTIDE SEQUENCE [LARGE SCALE GENOMIC DNA]</scope>
    <source>
        <strain>ATCC 29543 / DSM 1740 / CCUG 13145 / JCM 31913 / LMG 7466 / NCTC 11488 / FDC 602W</strain>
    </source>
</reference>
<feature type="chain" id="PRO_0000137077" description="Nucleoside diphosphate kinase">
    <location>
        <begin position="1"/>
        <end position="137"/>
    </location>
</feature>
<feature type="active site" description="Pros-phosphohistidine intermediate" evidence="1">
    <location>
        <position position="115"/>
    </location>
</feature>
<feature type="binding site" evidence="1">
    <location>
        <position position="9"/>
    </location>
    <ligand>
        <name>ATP</name>
        <dbReference type="ChEBI" id="CHEBI:30616"/>
    </ligand>
</feature>
<feature type="binding site" evidence="1">
    <location>
        <position position="57"/>
    </location>
    <ligand>
        <name>ATP</name>
        <dbReference type="ChEBI" id="CHEBI:30616"/>
    </ligand>
</feature>
<feature type="binding site" evidence="1">
    <location>
        <position position="85"/>
    </location>
    <ligand>
        <name>ATP</name>
        <dbReference type="ChEBI" id="CHEBI:30616"/>
    </ligand>
</feature>
<feature type="binding site" evidence="1">
    <location>
        <position position="91"/>
    </location>
    <ligand>
        <name>ATP</name>
        <dbReference type="ChEBI" id="CHEBI:30616"/>
    </ligand>
</feature>
<feature type="binding site" evidence="1">
    <location>
        <position position="102"/>
    </location>
    <ligand>
        <name>ATP</name>
        <dbReference type="ChEBI" id="CHEBI:30616"/>
    </ligand>
</feature>
<feature type="binding site" evidence="1">
    <location>
        <position position="112"/>
    </location>
    <ligand>
        <name>ATP</name>
        <dbReference type="ChEBI" id="CHEBI:30616"/>
    </ligand>
</feature>
<sequence>MEQTLSIIKPDAVAKNVVGKIIDRFESNGLKVAAAKRLQLSRADAEQFYAVHKERPFFKDLVDFMVSGPVVAMVLEGENAVLKNRDLMGATDPKKAAPGTIRADFADSIDANAVHGSDSLENAKIEIAFFFSGREIN</sequence>
<proteinExistence type="inferred from homology"/>
<name>NDK_WOLSU</name>
<gene>
    <name evidence="1" type="primary">ndk</name>
    <name type="ordered locus">WS1991</name>
</gene>
<accession>Q7M7Z3</accession>